<feature type="chain" id="PRO_0000444626" description="Alpha-ketoglutaric semialdehyde dehydrogenase 2">
    <location>
        <begin position="1"/>
        <end position="525"/>
    </location>
</feature>
<feature type="active site" description="Proton acceptor" evidence="1">
    <location>
        <position position="266"/>
    </location>
</feature>
<feature type="active site" description="Nucleophile" evidence="1">
    <location>
        <position position="303"/>
    </location>
</feature>
<feature type="binding site" evidence="1">
    <location>
        <position position="185"/>
    </location>
    <ligand>
        <name>NAD(+)</name>
        <dbReference type="ChEBI" id="CHEBI:57540"/>
    </ligand>
</feature>
<feature type="binding site" evidence="1">
    <location>
        <position position="188"/>
    </location>
    <ligand>
        <name>NAD(+)</name>
        <dbReference type="ChEBI" id="CHEBI:57540"/>
    </ligand>
</feature>
<feature type="binding site" evidence="1">
    <location>
        <begin position="242"/>
        <end position="247"/>
    </location>
    <ligand>
        <name>NAD(+)</name>
        <dbReference type="ChEBI" id="CHEBI:57540"/>
    </ligand>
</feature>
<feature type="binding site" evidence="1">
    <location>
        <position position="394"/>
    </location>
    <ligand>
        <name>NAD(+)</name>
        <dbReference type="ChEBI" id="CHEBI:57540"/>
    </ligand>
</feature>
<evidence type="ECO:0000250" key="1">
    <source>
        <dbReference type="UniProtKB" id="P47895"/>
    </source>
</evidence>
<evidence type="ECO:0000269" key="2">
    <source>
    </source>
</evidence>
<evidence type="ECO:0000303" key="3">
    <source>
    </source>
</evidence>
<evidence type="ECO:0000305" key="4"/>
<evidence type="ECO:0000305" key="5">
    <source>
    </source>
</evidence>
<sequence length="525" mass="54351">MQLTGEMLIGAEAVAGSAGTLRAFDPSKGEPIDAPVFGVAAQADVERACELARDAFDAYRAQPLAARAAFLEAIADEIVALGDALIERAHAETGLPVARLQGERGRTVGQLRLFARVVRDGRFLAASIDPAQPARTPLPRSDLRLQKVGLGPVVVFGASNFPLAFSVAGGDTASALAAGCPVIVKAHEAHLGTSELVGRAIRAAVAKTGMPAGVFSLLVGPGRVIGGALVSHPAVQAVGFTGSRQGGMALVQIANARPQPIPVYAEMSSINPVVLFPAALAARGDAIATGFVDSLTLGVGQFCTNPGLVLAIDGPDLDRFETVAAQALAKKPAGVMLTQGIADAYRNGRGKLAELPGVREIGAGEAAQTDCQAGGALYEVGAQAFLAEPAFSHEVFGPASLIVRCRDLDEVARVLEALEGQLTATLQMDADDKPLARRLLPVLERKAGRLLVNGYPTGVEVCDAMVHGGPFPATSNPAVTSVGATAIERFLRPVCYQDFPDDLLPEGLQESNPLAIPRLRDGKAE</sequence>
<proteinExistence type="evidence at protein level"/>
<keyword id="KW-0903">Direct protein sequencing</keyword>
<keyword id="KW-0520">NAD</keyword>
<keyword id="KW-0521">NADP</keyword>
<keyword id="KW-0560">Oxidoreductase</keyword>
<comment type="function">
    <text evidence="2">Catalyzes the NAD(P)(+)-dependent oxidation of alpha-ketoglutaric semialdehyde (alphaKGSA) to alpha-ketoglutarate. Involved in D-glucarate/D-galactarate metabolism. Prefers NAD(+) to NADP(+) as a cosubstrate.</text>
</comment>
<comment type="catalytic activity">
    <reaction evidence="2">
        <text>2,5-dioxopentanoate + NADP(+) + H2O = 2-oxoglutarate + NADPH + 2 H(+)</text>
        <dbReference type="Rhea" id="RHEA:11296"/>
        <dbReference type="ChEBI" id="CHEBI:15377"/>
        <dbReference type="ChEBI" id="CHEBI:15378"/>
        <dbReference type="ChEBI" id="CHEBI:16810"/>
        <dbReference type="ChEBI" id="CHEBI:57783"/>
        <dbReference type="ChEBI" id="CHEBI:58136"/>
        <dbReference type="ChEBI" id="CHEBI:58349"/>
        <dbReference type="EC" id="1.2.1.26"/>
    </reaction>
</comment>
<comment type="catalytic activity">
    <reaction evidence="2">
        <text>2,5-dioxopentanoate + NAD(+) + H2O = 2-oxoglutarate + NADH + 2 H(+)</text>
        <dbReference type="Rhea" id="RHEA:47152"/>
        <dbReference type="ChEBI" id="CHEBI:15377"/>
        <dbReference type="ChEBI" id="CHEBI:15378"/>
        <dbReference type="ChEBI" id="CHEBI:16810"/>
        <dbReference type="ChEBI" id="CHEBI:57540"/>
        <dbReference type="ChEBI" id="CHEBI:57945"/>
        <dbReference type="ChEBI" id="CHEBI:58136"/>
    </reaction>
</comment>
<comment type="biophysicochemical properties">
    <kinetics>
        <KM evidence="2">24.6 uM for alpha-ketoglutaric semialdehyde (in the presence of NAD(+), at 25 degrees Celsius and pH 7.2)</KM>
        <KM evidence="2">11 uM for alpha-ketoglutaric semialdehyde (in the presence of NADP(+), at 25 degrees Celsius and pH 7.2)</KM>
        <KM evidence="2">116.9 uM for NAD(+) (at 25 degrees Celsius and pH 7.2)</KM>
        <KM evidence="2">62.2 uM for NADP(+) (at 25 degrees Celsius and pH 7.2)</KM>
        <Vmax evidence="2">37.2 umol/min/mg enzyme for the oxidation of alpha-ketoglutaric semialdehyde with NAD(+) (at 25 degrees Celsius and pH 7.2)</Vmax>
        <Vmax evidence="2">14.8 umol/min/mg enzyme for the oxidation of alpha-ketoglutaric semialdehyde with NADP(+) (at 25 degrees Celsius and pH 7.2)</Vmax>
        <text evidence="2">kcat is 53.9 sec(-1) with alpha-ketoglutaric semialdehyde as substrate (in the presence of NAD(+)). kcat is 15.4 sec(-1) with alpha-ketoglutaric semialdehyde as substrate (in the presence of NADP(+)).</text>
    </kinetics>
</comment>
<comment type="pathway">
    <text evidence="5">Carbohydrate acid metabolism; D-glucarate degradation.</text>
</comment>
<comment type="pathway">
    <text evidence="5">Carbohydrate acid metabolism; galactarate degradation.</text>
</comment>
<comment type="subunit">
    <text evidence="2">Homodimer.</text>
</comment>
<comment type="induction">
    <text evidence="2">Induced by D-glucarate and D-galactarate.</text>
</comment>
<comment type="similarity">
    <text evidence="4">Belongs to the aldehyde dehydrogenase family.</text>
</comment>
<organism>
    <name type="scientific">Azospirillum brasilense</name>
    <dbReference type="NCBI Taxonomy" id="192"/>
    <lineage>
        <taxon>Bacteria</taxon>
        <taxon>Pseudomonadati</taxon>
        <taxon>Pseudomonadota</taxon>
        <taxon>Alphaproteobacteria</taxon>
        <taxon>Rhodospirillales</taxon>
        <taxon>Azospirillaceae</taxon>
        <taxon>Azospirillum</taxon>
    </lineage>
</organism>
<name>KGSD2_AZOBR</name>
<accession>Q08IC0</accession>
<dbReference type="EC" id="1.2.1.26" evidence="2"/>
<dbReference type="EMBL" id="AB275768">
    <property type="protein sequence ID" value="BAF33385.1"/>
    <property type="molecule type" value="Genomic_DNA"/>
</dbReference>
<dbReference type="SMR" id="Q08IC0"/>
<dbReference type="BRENDA" id="1.2.1.26">
    <property type="organism ID" value="611"/>
</dbReference>
<dbReference type="SABIO-RK" id="Q08IC0"/>
<dbReference type="UniPathway" id="UPA00564"/>
<dbReference type="UniPathway" id="UPA00565"/>
<dbReference type="GO" id="GO:0047533">
    <property type="term" value="F:2,5-dioxovalerate dehydrogenase (NADP+) activity"/>
    <property type="evidence" value="ECO:0007669"/>
    <property type="project" value="UniProtKB-EC"/>
</dbReference>
<dbReference type="GO" id="GO:0042838">
    <property type="term" value="P:D-glucarate catabolic process"/>
    <property type="evidence" value="ECO:0007669"/>
    <property type="project" value="UniProtKB-UniPathway"/>
</dbReference>
<dbReference type="GO" id="GO:0046392">
    <property type="term" value="P:galactarate catabolic process"/>
    <property type="evidence" value="ECO:0007669"/>
    <property type="project" value="UniProtKB-UniPathway"/>
</dbReference>
<dbReference type="CDD" id="cd07129">
    <property type="entry name" value="ALDH_KGSADH"/>
    <property type="match status" value="1"/>
</dbReference>
<dbReference type="FunFam" id="3.40.605.10:FF:000037">
    <property type="entry name" value="NADP-dependent fatty aldehyde dehydrogenase"/>
    <property type="match status" value="1"/>
</dbReference>
<dbReference type="Gene3D" id="3.40.605.10">
    <property type="entry name" value="Aldehyde Dehydrogenase, Chain A, domain 1"/>
    <property type="match status" value="1"/>
</dbReference>
<dbReference type="Gene3D" id="3.40.309.10">
    <property type="entry name" value="Aldehyde Dehydrogenase, Chain A, domain 2"/>
    <property type="match status" value="1"/>
</dbReference>
<dbReference type="InterPro" id="IPR016161">
    <property type="entry name" value="Ald_DH/histidinol_DH"/>
</dbReference>
<dbReference type="InterPro" id="IPR016163">
    <property type="entry name" value="Ald_DH_C"/>
</dbReference>
<dbReference type="InterPro" id="IPR016162">
    <property type="entry name" value="Ald_DH_N"/>
</dbReference>
<dbReference type="InterPro" id="IPR015590">
    <property type="entry name" value="Aldehyde_DH_dom"/>
</dbReference>
<dbReference type="InterPro" id="IPR050740">
    <property type="entry name" value="Aldehyde_DH_Superfamily"/>
</dbReference>
<dbReference type="InterPro" id="IPR044151">
    <property type="entry name" value="ALDH_KGSADH"/>
</dbReference>
<dbReference type="PANTHER" id="PTHR43353:SF3">
    <property type="entry name" value="ALDEHYDE DEHYDROGENASE-RELATED"/>
    <property type="match status" value="1"/>
</dbReference>
<dbReference type="PANTHER" id="PTHR43353">
    <property type="entry name" value="SUCCINATE-SEMIALDEHYDE DEHYDROGENASE, MITOCHONDRIAL"/>
    <property type="match status" value="1"/>
</dbReference>
<dbReference type="Pfam" id="PF00171">
    <property type="entry name" value="Aldedh"/>
    <property type="match status" value="1"/>
</dbReference>
<dbReference type="SUPFAM" id="SSF53720">
    <property type="entry name" value="ALDH-like"/>
    <property type="match status" value="1"/>
</dbReference>
<protein>
    <recommendedName>
        <fullName evidence="3">Alpha-ketoglutaric semialdehyde dehydrogenase 2</fullName>
        <shortName evidence="3">alphaKGSA dehydrogenase 2</shortName>
        <ecNumber evidence="2">1.2.1.26</ecNumber>
    </recommendedName>
    <alternativeName>
        <fullName evidence="4">2,5-dioxovalerate dehydrogenase 2</fullName>
    </alternativeName>
    <alternativeName>
        <fullName evidence="3">KGSADH-II</fullName>
    </alternativeName>
</protein>
<reference key="1">
    <citation type="journal article" date="2007" name="J. Biol. Chem.">
        <title>alpha-ketoglutaric semialdehyde dehydrogenase isozymes involved in metabolic pathways of D-glucarate, D-galactarate, and hydroxy-L-proline. Molecular and metabolic convergent evolution.</title>
        <authorList>
            <person name="Watanabe S."/>
            <person name="Yamada M."/>
            <person name="Ohtsu I."/>
            <person name="Makino K."/>
        </authorList>
    </citation>
    <scope>NUCLEOTIDE SEQUENCE [GENOMIC DNA]</scope>
    <scope>PROTEIN SEQUENCE OF 1-15</scope>
    <scope>IDENTIFICATION BY MASS SPECTROMETRY</scope>
    <scope>FUNCTION</scope>
    <scope>CATALYTIC ACTIVITY</scope>
    <scope>BIOPHYSICOCHEMICAL PROPERTIES</scope>
    <scope>PATHWAY</scope>
    <scope>SUBUNIT</scope>
    <scope>INDUCTION</scope>
    <source>
        <strain>ATCC 29145 / DSM 1690 / IMET 11303 / Sp7</strain>
    </source>
</reference>